<organism>
    <name type="scientific">Bos taurus</name>
    <name type="common">Bovine</name>
    <dbReference type="NCBI Taxonomy" id="9913"/>
    <lineage>
        <taxon>Eukaryota</taxon>
        <taxon>Metazoa</taxon>
        <taxon>Chordata</taxon>
        <taxon>Craniata</taxon>
        <taxon>Vertebrata</taxon>
        <taxon>Euteleostomi</taxon>
        <taxon>Mammalia</taxon>
        <taxon>Eutheria</taxon>
        <taxon>Laurasiatheria</taxon>
        <taxon>Artiodactyla</taxon>
        <taxon>Ruminantia</taxon>
        <taxon>Pecora</taxon>
        <taxon>Bovidae</taxon>
        <taxon>Bovinae</taxon>
        <taxon>Bos</taxon>
    </lineage>
</organism>
<evidence type="ECO:0000250" key="1"/>
<evidence type="ECO:0000250" key="2">
    <source>
        <dbReference type="UniProtKB" id="Q5QJE6"/>
    </source>
</evidence>
<evidence type="ECO:0000250" key="3">
    <source>
        <dbReference type="UniProtKB" id="Q8R2M2"/>
    </source>
</evidence>
<evidence type="ECO:0000255" key="4"/>
<evidence type="ECO:0000256" key="5">
    <source>
        <dbReference type="SAM" id="MobiDB-lite"/>
    </source>
</evidence>
<proteinExistence type="evidence at transcript level"/>
<gene>
    <name type="primary">DNTTIP2</name>
</gene>
<protein>
    <recommendedName>
        <fullName>Deoxynucleotidyltransferase terminal-interacting protein 2</fullName>
    </recommendedName>
</protein>
<name>TDIF2_BOVIN</name>
<dbReference type="EMBL" id="BC120039">
    <property type="protein sequence ID" value="AAI20040.1"/>
    <property type="molecule type" value="mRNA"/>
</dbReference>
<dbReference type="RefSeq" id="NP_001068974.1">
    <property type="nucleotide sequence ID" value="NM_001075506.1"/>
</dbReference>
<dbReference type="SMR" id="Q0P5H2"/>
<dbReference type="FunCoup" id="Q0P5H2">
    <property type="interactions" value="3365"/>
</dbReference>
<dbReference type="STRING" id="9913.ENSBTAP00000010317"/>
<dbReference type="PaxDb" id="9913-ENSBTAP00000010317"/>
<dbReference type="Ensembl" id="ENSBTAT00000010317.6">
    <property type="protein sequence ID" value="ENSBTAP00000010317.5"/>
    <property type="gene ID" value="ENSBTAG00000047679.2"/>
</dbReference>
<dbReference type="GeneID" id="511258"/>
<dbReference type="KEGG" id="bta:511258"/>
<dbReference type="CTD" id="30836"/>
<dbReference type="VEuPathDB" id="HostDB:ENSBTAG00000047679"/>
<dbReference type="VGNC" id="VGNC:28152">
    <property type="gene designation" value="DNTTIP2"/>
</dbReference>
<dbReference type="eggNOG" id="KOG3100">
    <property type="taxonomic scope" value="Eukaryota"/>
</dbReference>
<dbReference type="GeneTree" id="ENSGT00510000048142"/>
<dbReference type="HOGENOM" id="CLU_018725_0_0_1"/>
<dbReference type="InParanoid" id="Q0P5H2"/>
<dbReference type="OMA" id="SENMSCD"/>
<dbReference type="OrthoDB" id="427886at2759"/>
<dbReference type="TreeFam" id="TF105964"/>
<dbReference type="CD-CODE" id="D7FE2080">
    <property type="entry name" value="Nucleolus"/>
</dbReference>
<dbReference type="Proteomes" id="UP000009136">
    <property type="component" value="Chromosome 3"/>
</dbReference>
<dbReference type="Bgee" id="ENSBTAG00000047679">
    <property type="expression patterns" value="Expressed in oocyte and 110 other cell types or tissues"/>
</dbReference>
<dbReference type="GO" id="GO:0005694">
    <property type="term" value="C:chromosome"/>
    <property type="evidence" value="ECO:0007669"/>
    <property type="project" value="Ensembl"/>
</dbReference>
<dbReference type="GO" id="GO:0005730">
    <property type="term" value="C:nucleolus"/>
    <property type="evidence" value="ECO:0000318"/>
    <property type="project" value="GO_Central"/>
</dbReference>
<dbReference type="GO" id="GO:0005654">
    <property type="term" value="C:nucleoplasm"/>
    <property type="evidence" value="ECO:0007669"/>
    <property type="project" value="Ensembl"/>
</dbReference>
<dbReference type="GO" id="GO:0032040">
    <property type="term" value="C:small-subunit processome"/>
    <property type="evidence" value="ECO:0000250"/>
    <property type="project" value="UniProtKB"/>
</dbReference>
<dbReference type="GO" id="GO:0042274">
    <property type="term" value="P:ribosomal small subunit biogenesis"/>
    <property type="evidence" value="ECO:0000250"/>
    <property type="project" value="UniProtKB"/>
</dbReference>
<dbReference type="GO" id="GO:0006396">
    <property type="term" value="P:RNA processing"/>
    <property type="evidence" value="ECO:0000318"/>
    <property type="project" value="GO_Central"/>
</dbReference>
<dbReference type="InterPro" id="IPR039883">
    <property type="entry name" value="Fcf2/DNTTIP2"/>
</dbReference>
<dbReference type="InterPro" id="IPR014810">
    <property type="entry name" value="Fcf2_C"/>
</dbReference>
<dbReference type="PANTHER" id="PTHR21686">
    <property type="entry name" value="DEOXYNUCLEOTIDYLTRANSFERASE TERMINAL-INTERACTING PROTEIN 2"/>
    <property type="match status" value="1"/>
</dbReference>
<dbReference type="PANTHER" id="PTHR21686:SF12">
    <property type="entry name" value="DEOXYNUCLEOTIDYLTRANSFERASE TERMINAL-INTERACTING PROTEIN 2"/>
    <property type="match status" value="1"/>
</dbReference>
<dbReference type="Pfam" id="PF08698">
    <property type="entry name" value="Fcf2"/>
    <property type="match status" value="1"/>
</dbReference>
<comment type="function">
    <text evidence="2">Regulates the transcriptional activity of DNTT and ESR1. May function as a chromatin remodeling protein. Part of the small subunit (SSU) processome, first precursor of the small eukaryotic ribosomal subunit. During the assembly of the SSU processome in the nucleolus, many ribosome biogenesis factors, an RNA chaperone and ribosomal proteins associate with the nascent pre-rRNA and work in concert to generate RNA folding, modifications, rearrangements and cleavage as well as targeted degradation of pre-ribosomal RNA by the RNA exosome.</text>
</comment>
<comment type="subunit">
    <text evidence="2">Forms a ternary complex with DNTT and core histone; interaction with PCNA releases DNTT and H2A/H2B histones from this ternary complex. Interacts with ESR1, ESR2, PPARG and RXRA. Part of the small subunit (SSU) processome, composed of more than 70 proteins and the RNA chaperone small nucleolar RNA (snoRNA) U3.</text>
</comment>
<comment type="subcellular location">
    <subcellularLocation>
        <location evidence="2">Nucleus</location>
    </subcellularLocation>
    <subcellularLocation>
        <location evidence="2">Nucleus</location>
        <location evidence="2">Nucleolus</location>
    </subcellularLocation>
</comment>
<reference key="1">
    <citation type="submission" date="2006-08" db="EMBL/GenBank/DDBJ databases">
        <authorList>
            <consortium name="NIH - Mammalian Gene Collection (MGC) project"/>
        </authorList>
    </citation>
    <scope>NUCLEOTIDE SEQUENCE [LARGE SCALE MRNA]</scope>
    <source>
        <strain>Hereford</strain>
        <tissue>Fetal liver</tissue>
    </source>
</reference>
<feature type="chain" id="PRO_0000318504" description="Deoxynucleotidyltransferase terminal-interacting protein 2">
    <location>
        <begin position="1"/>
        <end position="766"/>
    </location>
</feature>
<feature type="region of interest" description="Disordered" evidence="5">
    <location>
        <begin position="1"/>
        <end position="99"/>
    </location>
</feature>
<feature type="region of interest" description="Disordered" evidence="5">
    <location>
        <begin position="155"/>
        <end position="175"/>
    </location>
</feature>
<feature type="region of interest" description="Disordered" evidence="5">
    <location>
        <begin position="345"/>
        <end position="367"/>
    </location>
</feature>
<feature type="region of interest" description="Disordered" evidence="5">
    <location>
        <begin position="390"/>
        <end position="450"/>
    </location>
</feature>
<feature type="region of interest" description="Disordered" evidence="5">
    <location>
        <begin position="520"/>
        <end position="557"/>
    </location>
</feature>
<feature type="region of interest" description="TdBR region; mediates interaction with DNTT" evidence="1">
    <location>
        <begin position="558"/>
        <end position="615"/>
    </location>
</feature>
<feature type="coiled-coil region" evidence="4">
    <location>
        <begin position="515"/>
        <end position="552"/>
    </location>
</feature>
<feature type="compositionally biased region" description="Polar residues" evidence="5">
    <location>
        <begin position="13"/>
        <end position="28"/>
    </location>
</feature>
<feature type="compositionally biased region" description="Polar residues" evidence="5">
    <location>
        <begin position="42"/>
        <end position="56"/>
    </location>
</feature>
<feature type="compositionally biased region" description="Basic and acidic residues" evidence="5">
    <location>
        <begin position="166"/>
        <end position="175"/>
    </location>
</feature>
<feature type="compositionally biased region" description="Basic and acidic residues" evidence="5">
    <location>
        <begin position="421"/>
        <end position="434"/>
    </location>
</feature>
<feature type="compositionally biased region" description="Polar residues" evidence="5">
    <location>
        <begin position="435"/>
        <end position="444"/>
    </location>
</feature>
<feature type="compositionally biased region" description="Acidic residues" evidence="5">
    <location>
        <begin position="520"/>
        <end position="542"/>
    </location>
</feature>
<feature type="modified residue" description="Phosphothreonine" evidence="2">
    <location>
        <position position="127"/>
    </location>
</feature>
<feature type="modified residue" description="Phosphoserine" evidence="2">
    <location>
        <position position="139"/>
    </location>
</feature>
<feature type="modified residue" description="Phosphoserine" evidence="2">
    <location>
        <position position="143"/>
    </location>
</feature>
<feature type="modified residue" description="Phosphoserine" evidence="2">
    <location>
        <position position="146"/>
    </location>
</feature>
<feature type="modified residue" description="Phosphoserine" evidence="2">
    <location>
        <position position="180"/>
    </location>
</feature>
<feature type="modified residue" description="Phosphoserine" evidence="2">
    <location>
        <position position="190"/>
    </location>
</feature>
<feature type="modified residue" description="Phosphothreonine" evidence="2">
    <location>
        <position position="229"/>
    </location>
</feature>
<feature type="modified residue" description="Phosphoserine" evidence="2">
    <location>
        <position position="236"/>
    </location>
</feature>
<feature type="modified residue" description="Phosphoserine" evidence="2">
    <location>
        <position position="248"/>
    </location>
</feature>
<feature type="modified residue" description="Phosphoserine" evidence="2">
    <location>
        <position position="250"/>
    </location>
</feature>
<feature type="modified residue" description="Phosphoserine" evidence="3">
    <location>
        <position position="258"/>
    </location>
</feature>
<feature type="modified residue" description="Phosphoserine" evidence="2">
    <location>
        <position position="334"/>
    </location>
</feature>
<feature type="modified residue" description="Phosphothreonine" evidence="2">
    <location>
        <position position="620"/>
    </location>
</feature>
<feature type="cross-link" description="Glycyl lysine isopeptide (Lys-Gly) (interchain with G-Cter in SUMO2)" evidence="2">
    <location>
        <position position="217"/>
    </location>
</feature>
<feature type="cross-link" description="Glycyl lysine isopeptide (Lys-Gly) (interchain with G-Cter in SUMO2)" evidence="2">
    <location>
        <position position="254"/>
    </location>
</feature>
<feature type="cross-link" description="Glycyl lysine isopeptide (Lys-Gly) (interchain with G-Cter in SUMO2)" evidence="2">
    <location>
        <position position="327"/>
    </location>
</feature>
<feature type="cross-link" description="Glycyl lysine isopeptide (Lys-Gly) (interchain with G-Cter in SUMO2)" evidence="2">
    <location>
        <position position="394"/>
    </location>
</feature>
<feature type="cross-link" description="Glycyl lysine isopeptide (Lys-Gly) (interchain with G-Cter in SUMO2)" evidence="2">
    <location>
        <position position="568"/>
    </location>
</feature>
<feature type="cross-link" description="Glycyl lysine isopeptide (Lys-Gly) (interchain with G-Cter in SUMO2)" evidence="2">
    <location>
        <position position="594"/>
    </location>
</feature>
<feature type="cross-link" description="Glycyl lysine isopeptide (Lys-Gly) (interchain with G-Cter in SUMO2)" evidence="2">
    <location>
        <position position="616"/>
    </location>
</feature>
<feature type="cross-link" description="Glycyl lysine isopeptide (Lys-Gly) (interchain with G-Cter in SUMO2)" evidence="2">
    <location>
        <position position="636"/>
    </location>
</feature>
<feature type="cross-link" description="Glycyl lysine isopeptide (Lys-Gly) (interchain with G-Cter in SUMO2)" evidence="2">
    <location>
        <position position="659"/>
    </location>
</feature>
<feature type="cross-link" description="Glycyl lysine isopeptide (Lys-Gly) (interchain with G-Cter in SUMO2)" evidence="2">
    <location>
        <position position="668"/>
    </location>
</feature>
<feature type="cross-link" description="Glycyl lysine isopeptide (Lys-Gly) (interchain with G-Cter in SUMO2)" evidence="2">
    <location>
        <position position="696"/>
    </location>
</feature>
<feature type="cross-link" description="Glycyl lysine isopeptide (Lys-Gly) (interchain with G-Cter in SUMO2)" evidence="2">
    <location>
        <position position="741"/>
    </location>
</feature>
<accession>Q0P5H2</accession>
<sequence>MVVTRSARPQARNEATSVESLRQKNSAVTRLHVHPKGRKGSSPDNPNTTESQTTPERSPAPKTRKSGTTGSLPEMNKPATDGEISEAESDCSSVPEVQDPVFRVTRRRQILVAGTPVSSVRKRLKITRVSESHTEEVVSEADSHVSGISRIMPPTEITTRRSKAKSQREPKQESHVEVISDAESSCSDISFSGIATRRTTRSMQRKLQAQTEENNTKIVLENEKEIIHTPVNLEDSVNRRTSRLLARSLSQINKPNFSNNEIYNDPDDSFFGISGKKLAVKKTRNFTIREEKQDSISPLKEITKQNCKSLDEEAKKIIDGGKEGNEKNSQLNLSEFQDTGLQQLVSQRHSTPESDKTTSESSTLNHEAVMKSLAQTFAVVEMDRWNEERKNAIKTSDCSEPGDGSYSDSDEECTVIGVSEDMSKEKEVDSESDTKPSNLEFNTTQDKDDSVLLVLSSDESQQSEHSENEEDTVCFVENNGNKESLNGDSENLSHDNALFVIDTTPGLSADKNFYLDEEDKAGEVATEEEEEEEEEESEEELSDHDRNKDNEFSDEDNLLSNTKSKLLKLMSSSIDTGLNIKELGGLYINFNADKVQLNKRTLTQMKEKRKDELLQKTVITPEFEKNYCVPPYSESKYKLQKKRRQERQKTAGDGWFGMKAPELTDELKNDLKALKMRASMDPKRFYKKNDRDGFPKYFQIGTIVDNPADFYHSRVPKKQRKRTIVEELLADSEFRRYNRRKYSEIMAEKAANAAGKKFRKKKKFRN</sequence>
<keyword id="KW-0175">Coiled coil</keyword>
<keyword id="KW-1017">Isopeptide bond</keyword>
<keyword id="KW-0539">Nucleus</keyword>
<keyword id="KW-0597">Phosphoprotein</keyword>
<keyword id="KW-1185">Reference proteome</keyword>
<keyword id="KW-0804">Transcription</keyword>
<keyword id="KW-0805">Transcription regulation</keyword>
<keyword id="KW-0832">Ubl conjugation</keyword>